<gene>
    <name evidence="1" type="primary">rnhB</name>
    <name type="ordered locus">BURPS1106A_2478</name>
</gene>
<accession>A3NWL6</accession>
<feature type="chain" id="PRO_1000031127" description="Ribonuclease HII">
    <location>
        <begin position="1"/>
        <end position="214"/>
    </location>
</feature>
<feature type="domain" description="RNase H type-2" evidence="2">
    <location>
        <begin position="26"/>
        <end position="214"/>
    </location>
</feature>
<feature type="binding site" evidence="1">
    <location>
        <position position="32"/>
    </location>
    <ligand>
        <name>a divalent metal cation</name>
        <dbReference type="ChEBI" id="CHEBI:60240"/>
    </ligand>
</feature>
<feature type="binding site" evidence="1">
    <location>
        <position position="33"/>
    </location>
    <ligand>
        <name>a divalent metal cation</name>
        <dbReference type="ChEBI" id="CHEBI:60240"/>
    </ligand>
</feature>
<feature type="binding site" evidence="1">
    <location>
        <position position="124"/>
    </location>
    <ligand>
        <name>a divalent metal cation</name>
        <dbReference type="ChEBI" id="CHEBI:60240"/>
    </ligand>
</feature>
<keyword id="KW-0963">Cytoplasm</keyword>
<keyword id="KW-0255">Endonuclease</keyword>
<keyword id="KW-0378">Hydrolase</keyword>
<keyword id="KW-0464">Manganese</keyword>
<keyword id="KW-0479">Metal-binding</keyword>
<keyword id="KW-0540">Nuclease</keyword>
<proteinExistence type="inferred from homology"/>
<name>RNH2_BURP0</name>
<comment type="function">
    <text evidence="1">Endonuclease that specifically degrades the RNA of RNA-DNA hybrids.</text>
</comment>
<comment type="catalytic activity">
    <reaction evidence="1">
        <text>Endonucleolytic cleavage to 5'-phosphomonoester.</text>
        <dbReference type="EC" id="3.1.26.4"/>
    </reaction>
</comment>
<comment type="cofactor">
    <cofactor evidence="1">
        <name>Mn(2+)</name>
        <dbReference type="ChEBI" id="CHEBI:29035"/>
    </cofactor>
    <cofactor evidence="1">
        <name>Mg(2+)</name>
        <dbReference type="ChEBI" id="CHEBI:18420"/>
    </cofactor>
    <text evidence="1">Manganese or magnesium. Binds 1 divalent metal ion per monomer in the absence of substrate. May bind a second metal ion after substrate binding.</text>
</comment>
<comment type="subcellular location">
    <subcellularLocation>
        <location evidence="1">Cytoplasm</location>
    </subcellularLocation>
</comment>
<comment type="similarity">
    <text evidence="1">Belongs to the RNase HII family.</text>
</comment>
<evidence type="ECO:0000255" key="1">
    <source>
        <dbReference type="HAMAP-Rule" id="MF_00052"/>
    </source>
</evidence>
<evidence type="ECO:0000255" key="2">
    <source>
        <dbReference type="PROSITE-ProRule" id="PRU01319"/>
    </source>
</evidence>
<dbReference type="EC" id="3.1.26.4" evidence="1"/>
<dbReference type="EMBL" id="CP000572">
    <property type="protein sequence ID" value="ABN92018.1"/>
    <property type="molecule type" value="Genomic_DNA"/>
</dbReference>
<dbReference type="RefSeq" id="WP_004191384.1">
    <property type="nucleotide sequence ID" value="NC_009076.1"/>
</dbReference>
<dbReference type="SMR" id="A3NWL6"/>
<dbReference type="GeneID" id="92979267"/>
<dbReference type="KEGG" id="bpl:BURPS1106A_2478"/>
<dbReference type="HOGENOM" id="CLU_036532_3_2_4"/>
<dbReference type="Proteomes" id="UP000006738">
    <property type="component" value="Chromosome I"/>
</dbReference>
<dbReference type="GO" id="GO:0005737">
    <property type="term" value="C:cytoplasm"/>
    <property type="evidence" value="ECO:0007669"/>
    <property type="project" value="UniProtKB-SubCell"/>
</dbReference>
<dbReference type="GO" id="GO:0032299">
    <property type="term" value="C:ribonuclease H2 complex"/>
    <property type="evidence" value="ECO:0007669"/>
    <property type="project" value="TreeGrafter"/>
</dbReference>
<dbReference type="GO" id="GO:0030145">
    <property type="term" value="F:manganese ion binding"/>
    <property type="evidence" value="ECO:0007669"/>
    <property type="project" value="UniProtKB-UniRule"/>
</dbReference>
<dbReference type="GO" id="GO:0003723">
    <property type="term" value="F:RNA binding"/>
    <property type="evidence" value="ECO:0007669"/>
    <property type="project" value="InterPro"/>
</dbReference>
<dbReference type="GO" id="GO:0004523">
    <property type="term" value="F:RNA-DNA hybrid ribonuclease activity"/>
    <property type="evidence" value="ECO:0007669"/>
    <property type="project" value="UniProtKB-UniRule"/>
</dbReference>
<dbReference type="GO" id="GO:0043137">
    <property type="term" value="P:DNA replication, removal of RNA primer"/>
    <property type="evidence" value="ECO:0007669"/>
    <property type="project" value="TreeGrafter"/>
</dbReference>
<dbReference type="GO" id="GO:0006298">
    <property type="term" value="P:mismatch repair"/>
    <property type="evidence" value="ECO:0007669"/>
    <property type="project" value="TreeGrafter"/>
</dbReference>
<dbReference type="CDD" id="cd07182">
    <property type="entry name" value="RNase_HII_bacteria_HII_like"/>
    <property type="match status" value="1"/>
</dbReference>
<dbReference type="FunFam" id="3.30.420.10:FF:000006">
    <property type="entry name" value="Ribonuclease HII"/>
    <property type="match status" value="1"/>
</dbReference>
<dbReference type="Gene3D" id="3.30.420.10">
    <property type="entry name" value="Ribonuclease H-like superfamily/Ribonuclease H"/>
    <property type="match status" value="1"/>
</dbReference>
<dbReference type="HAMAP" id="MF_00052_B">
    <property type="entry name" value="RNase_HII_B"/>
    <property type="match status" value="1"/>
</dbReference>
<dbReference type="InterPro" id="IPR022898">
    <property type="entry name" value="RNase_HII"/>
</dbReference>
<dbReference type="InterPro" id="IPR001352">
    <property type="entry name" value="RNase_HII/HIII"/>
</dbReference>
<dbReference type="InterPro" id="IPR024567">
    <property type="entry name" value="RNase_HII/HIII_dom"/>
</dbReference>
<dbReference type="InterPro" id="IPR012337">
    <property type="entry name" value="RNaseH-like_sf"/>
</dbReference>
<dbReference type="InterPro" id="IPR036397">
    <property type="entry name" value="RNaseH_sf"/>
</dbReference>
<dbReference type="NCBIfam" id="NF000594">
    <property type="entry name" value="PRK00015.1-1"/>
    <property type="match status" value="1"/>
</dbReference>
<dbReference type="NCBIfam" id="NF000595">
    <property type="entry name" value="PRK00015.1-3"/>
    <property type="match status" value="1"/>
</dbReference>
<dbReference type="NCBIfam" id="NF000596">
    <property type="entry name" value="PRK00015.1-4"/>
    <property type="match status" value="1"/>
</dbReference>
<dbReference type="PANTHER" id="PTHR10954">
    <property type="entry name" value="RIBONUCLEASE H2 SUBUNIT A"/>
    <property type="match status" value="1"/>
</dbReference>
<dbReference type="PANTHER" id="PTHR10954:SF18">
    <property type="entry name" value="RIBONUCLEASE HII"/>
    <property type="match status" value="1"/>
</dbReference>
<dbReference type="Pfam" id="PF01351">
    <property type="entry name" value="RNase_HII"/>
    <property type="match status" value="1"/>
</dbReference>
<dbReference type="SUPFAM" id="SSF53098">
    <property type="entry name" value="Ribonuclease H-like"/>
    <property type="match status" value="1"/>
</dbReference>
<dbReference type="PROSITE" id="PS51975">
    <property type="entry name" value="RNASE_H_2"/>
    <property type="match status" value="1"/>
</dbReference>
<reference key="1">
    <citation type="journal article" date="2010" name="Genome Biol. Evol.">
        <title>Continuing evolution of Burkholderia mallei through genome reduction and large-scale rearrangements.</title>
        <authorList>
            <person name="Losada L."/>
            <person name="Ronning C.M."/>
            <person name="DeShazer D."/>
            <person name="Woods D."/>
            <person name="Fedorova N."/>
            <person name="Kim H.S."/>
            <person name="Shabalina S.A."/>
            <person name="Pearson T.R."/>
            <person name="Brinkac L."/>
            <person name="Tan P."/>
            <person name="Nandi T."/>
            <person name="Crabtree J."/>
            <person name="Badger J."/>
            <person name="Beckstrom-Sternberg S."/>
            <person name="Saqib M."/>
            <person name="Schutzer S.E."/>
            <person name="Keim P."/>
            <person name="Nierman W.C."/>
        </authorList>
    </citation>
    <scope>NUCLEOTIDE SEQUENCE [LARGE SCALE GENOMIC DNA]</scope>
    <source>
        <strain>1106a</strain>
    </source>
</reference>
<sequence length="214" mass="22655">MATTRKPRGGAGGATQPALDFDAPGEIVCGVDEAGRGPLAGPVVAAAVVLDPARPIVGLDDSKALSAKKRERLFDEIVAYALAYSVASASVEEIDSLNILHATMLAMKRAVEGLSVLPTLAKIDGNRCPMLAIRSEAIVGGDALVPSISAASILAKVTRDRMLVELHQQFPMYGFDAHAGYGTPQHLAALREHGPCEHHRRSFAPVREAFDLIR</sequence>
<protein>
    <recommendedName>
        <fullName evidence="1">Ribonuclease HII</fullName>
        <shortName evidence="1">RNase HII</shortName>
        <ecNumber evidence="1">3.1.26.4</ecNumber>
    </recommendedName>
</protein>
<organism>
    <name type="scientific">Burkholderia pseudomallei (strain 1106a)</name>
    <dbReference type="NCBI Taxonomy" id="357348"/>
    <lineage>
        <taxon>Bacteria</taxon>
        <taxon>Pseudomonadati</taxon>
        <taxon>Pseudomonadota</taxon>
        <taxon>Betaproteobacteria</taxon>
        <taxon>Burkholderiales</taxon>
        <taxon>Burkholderiaceae</taxon>
        <taxon>Burkholderia</taxon>
        <taxon>pseudomallei group</taxon>
    </lineage>
</organism>